<name>EF1D_MACFA</name>
<feature type="initiator methionine" description="Removed" evidence="2">
    <location>
        <position position="1"/>
    </location>
</feature>
<feature type="chain" id="PRO_0000382455" description="Elongation factor 1-delta">
    <location>
        <begin position="2"/>
        <end position="281"/>
    </location>
</feature>
<feature type="region of interest" description="Leucine-zipper" evidence="1">
    <location>
        <begin position="80"/>
        <end position="115"/>
    </location>
</feature>
<feature type="region of interest" description="Disordered" evidence="5">
    <location>
        <begin position="118"/>
        <end position="172"/>
    </location>
</feature>
<feature type="region of interest" description="Catalytic (GEF)" evidence="1">
    <location>
        <begin position="173"/>
        <end position="281"/>
    </location>
</feature>
<feature type="compositionally biased region" description="Acidic residues" evidence="5">
    <location>
        <begin position="149"/>
        <end position="169"/>
    </location>
</feature>
<feature type="modified residue" description="N-acetylalanine" evidence="2">
    <location>
        <position position="2"/>
    </location>
</feature>
<feature type="modified residue" description="N6-acetyllysine" evidence="2">
    <location>
        <position position="17"/>
    </location>
</feature>
<feature type="modified residue" description="Phosphoserine" evidence="2">
    <location>
        <position position="37"/>
    </location>
</feature>
<feature type="modified residue" description="Phosphoserine" evidence="2">
    <location>
        <position position="44"/>
    </location>
</feature>
<feature type="modified residue" description="Phosphoserine" evidence="2">
    <location>
        <position position="60"/>
    </location>
</feature>
<feature type="modified residue" description="Phosphoserine" evidence="2">
    <location>
        <position position="86"/>
    </location>
</feature>
<feature type="modified residue" description="Phosphoserine" evidence="4">
    <location>
        <position position="106"/>
    </location>
</feature>
<feature type="modified residue" description="N6-acetyllysine" evidence="2">
    <location>
        <position position="107"/>
    </location>
</feature>
<feature type="modified residue" description="N6-acetyllysine; alternate" evidence="2">
    <location>
        <position position="117"/>
    </location>
</feature>
<feature type="modified residue" description="N6-succinyllysine; alternate" evidence="3">
    <location>
        <position position="117"/>
    </location>
</feature>
<feature type="modified residue" description="Phosphoserine" evidence="2">
    <location>
        <position position="119"/>
    </location>
</feature>
<feature type="modified residue" description="Phosphothreonine" evidence="2">
    <location>
        <position position="129"/>
    </location>
</feature>
<feature type="modified residue" description="Phosphoserine" evidence="2">
    <location>
        <position position="133"/>
    </location>
</feature>
<feature type="modified residue" description="Phosphothreonine" evidence="2">
    <location>
        <position position="147"/>
    </location>
</feature>
<feature type="modified residue" description="Phosphoserine; by CK2" evidence="2">
    <location>
        <position position="162"/>
    </location>
</feature>
<feature type="splice variant" id="VSP_037886" description="In isoform 2." evidence="6">
    <original>M</original>
    <variation>MRSGKASCTLETVWEDKHKYEEAERRFYEHEAMQAAASAQQLPAEGPAMNGPGQDDPEDTDEAEAPDGSSRSDPRKSQDGRKPLQKKRKRSPKSGLGPAAPALLGLSAEPVWLDKSGLGPAAPALLGLSAERVWLDKSLFDQAESSYRQKLADVAAQAAQPPALAPWGPCTHGSQVACHHVTWGTWVNKSSFDQAERAFVEWSQSLLLAPEGGHRQGTPDTGQQAAVPNPAHQPSPPVNGQPPLGSLQALVREVWLEKPRYDAAERGFYEALFDGHPPGKVRLQERAGLAEGARRGRRDRRGRHVLGNKRAGPRWADGEAPSALPYCYFLQKDAEAPWLSKPAYDSAECRHHVAEALRMAWCLEAASLSHRPGPRSGLSVSSLRPNRKM</variation>
    <location>
        <position position="1"/>
    </location>
</feature>
<feature type="sequence conflict" description="In Ref. 1; DK582287." evidence="7" ref="1">
    <original>G</original>
    <variation>V</variation>
    <location>
        <position position="35"/>
    </location>
</feature>
<protein>
    <recommendedName>
        <fullName>Elongation factor 1-delta</fullName>
        <shortName>EF-1-delta</shortName>
    </recommendedName>
</protein>
<evidence type="ECO:0000250" key="1"/>
<evidence type="ECO:0000250" key="2">
    <source>
        <dbReference type="UniProtKB" id="P29692"/>
    </source>
</evidence>
<evidence type="ECO:0000250" key="3">
    <source>
        <dbReference type="UniProtKB" id="P57776"/>
    </source>
</evidence>
<evidence type="ECO:0000250" key="4">
    <source>
        <dbReference type="UniProtKB" id="Q68FR9"/>
    </source>
</evidence>
<evidence type="ECO:0000256" key="5">
    <source>
        <dbReference type="SAM" id="MobiDB-lite"/>
    </source>
</evidence>
<evidence type="ECO:0000303" key="6">
    <source ref="1"/>
</evidence>
<evidence type="ECO:0000305" key="7"/>
<accession>Q4R3D4</accession>
<gene>
    <name type="primary">EEF1D</name>
    <name type="ORF">QthA-21064</name>
    <name type="ORF">QtsA-17735</name>
</gene>
<reference key="1">
    <citation type="submission" date="2005-06" db="EMBL/GenBank/DDBJ databases">
        <title>DNA sequences of macaque genes expressed in brain or testis and its evolutionary implications.</title>
        <authorList>
            <consortium name="International consortium for macaque cDNA sequencing and analysis"/>
        </authorList>
    </citation>
    <scope>NUCLEOTIDE SEQUENCE [LARGE SCALE MRNA] (ISOFORMS 1 AND 2)</scope>
    <source>
        <tissue>Testis</tissue>
        <tissue>Thymus</tissue>
    </source>
</reference>
<proteinExistence type="evidence at transcript level"/>
<organism>
    <name type="scientific">Macaca fascicularis</name>
    <name type="common">Crab-eating macaque</name>
    <name type="synonym">Cynomolgus monkey</name>
    <dbReference type="NCBI Taxonomy" id="9541"/>
    <lineage>
        <taxon>Eukaryota</taxon>
        <taxon>Metazoa</taxon>
        <taxon>Chordata</taxon>
        <taxon>Craniata</taxon>
        <taxon>Vertebrata</taxon>
        <taxon>Euteleostomi</taxon>
        <taxon>Mammalia</taxon>
        <taxon>Eutheria</taxon>
        <taxon>Euarchontoglires</taxon>
        <taxon>Primates</taxon>
        <taxon>Haplorrhini</taxon>
        <taxon>Catarrhini</taxon>
        <taxon>Cercopithecidae</taxon>
        <taxon>Cercopithecinae</taxon>
        <taxon>Macaca</taxon>
    </lineage>
</organism>
<keyword id="KW-0007">Acetylation</keyword>
<keyword id="KW-0025">Alternative splicing</keyword>
<keyword id="KW-0238">DNA-binding</keyword>
<keyword id="KW-0251">Elongation factor</keyword>
<keyword id="KW-0539">Nucleus</keyword>
<keyword id="KW-0597">Phosphoprotein</keyword>
<keyword id="KW-0648">Protein biosynthesis</keyword>
<keyword id="KW-1185">Reference proteome</keyword>
<keyword id="KW-0804">Transcription</keyword>
<keyword id="KW-0805">Transcription regulation</keyword>
<sequence>MATNFLVHEKIWFDKFKYDDAERRFYEQMNGPVAGASRQENGASVILRDIARARENIQKSLAGTSGPGASSGPSGDHSELVVRIASLEVENQSLRGVVQELQQAISKLEARLNVLEKSSPGHRATAPQTQHVSPMRQVEPPAKKPATPAEDDEDDDIDLFGSDNEEEDKEAAQLREERLRQYAEKKAKKPALVAKSSILLDVKPWDDETDMAQLEACVRSIQLDGLVWGASKLVPVGYGIRKLQIQCVVEDDKVGTDLLEEEITKFEEHVQSVDIAAFNKI</sequence>
<dbReference type="EMBL" id="AB169168">
    <property type="protein sequence ID" value="BAE01260.1"/>
    <property type="molecule type" value="mRNA"/>
</dbReference>
<dbReference type="EMBL" id="AB179332">
    <property type="protein sequence ID" value="BAE02383.1"/>
    <property type="molecule type" value="mRNA"/>
</dbReference>
<dbReference type="EMBL" id="DK582287">
    <property type="status" value="NOT_ANNOTATED_CDS"/>
    <property type="molecule type" value="mRNA"/>
</dbReference>
<dbReference type="RefSeq" id="NP_001271911.1">
    <property type="nucleotide sequence ID" value="NM_001284982.1"/>
</dbReference>
<dbReference type="RefSeq" id="XP_015310247.1">
    <molecule id="Q4R3D4-1"/>
    <property type="nucleotide sequence ID" value="XM_015454761.3"/>
</dbReference>
<dbReference type="RefSeq" id="XP_015310248.1">
    <molecule id="Q4R3D4-1"/>
    <property type="nucleotide sequence ID" value="XM_015454762.3"/>
</dbReference>
<dbReference type="BMRB" id="Q4R3D4"/>
<dbReference type="SMR" id="Q4R3D4"/>
<dbReference type="STRING" id="9541.ENSMFAP00000036028"/>
<dbReference type="GeneID" id="101866441"/>
<dbReference type="KEGG" id="mcf:101866441"/>
<dbReference type="CTD" id="1936"/>
<dbReference type="VEuPathDB" id="HostDB:ENSMFAG00000034313"/>
<dbReference type="eggNOG" id="KOG1668">
    <property type="taxonomic scope" value="Eukaryota"/>
</dbReference>
<dbReference type="OMA" id="EKMFHEV"/>
<dbReference type="Proteomes" id="UP000233100">
    <property type="component" value="Chromosome 8"/>
</dbReference>
<dbReference type="GO" id="GO:0005829">
    <property type="term" value="C:cytosol"/>
    <property type="evidence" value="ECO:0007669"/>
    <property type="project" value="TreeGrafter"/>
</dbReference>
<dbReference type="GO" id="GO:0005853">
    <property type="term" value="C:eukaryotic translation elongation factor 1 complex"/>
    <property type="evidence" value="ECO:0007669"/>
    <property type="project" value="InterPro"/>
</dbReference>
<dbReference type="GO" id="GO:0005634">
    <property type="term" value="C:nucleus"/>
    <property type="evidence" value="ECO:0007669"/>
    <property type="project" value="UniProtKB-SubCell"/>
</dbReference>
<dbReference type="GO" id="GO:0003677">
    <property type="term" value="F:DNA binding"/>
    <property type="evidence" value="ECO:0007669"/>
    <property type="project" value="UniProtKB-KW"/>
</dbReference>
<dbReference type="GO" id="GO:0005085">
    <property type="term" value="F:guanyl-nucleotide exchange factor activity"/>
    <property type="evidence" value="ECO:0007669"/>
    <property type="project" value="TreeGrafter"/>
</dbReference>
<dbReference type="GO" id="GO:0003746">
    <property type="term" value="F:translation elongation factor activity"/>
    <property type="evidence" value="ECO:0007669"/>
    <property type="project" value="UniProtKB-KW"/>
</dbReference>
<dbReference type="CDD" id="cd00292">
    <property type="entry name" value="EF1B"/>
    <property type="match status" value="1"/>
</dbReference>
<dbReference type="FunFam" id="3.30.70.60:FF:000001">
    <property type="entry name" value="Elongation factor 1-beta 1 like"/>
    <property type="match status" value="1"/>
</dbReference>
<dbReference type="Gene3D" id="3.30.70.60">
    <property type="match status" value="1"/>
</dbReference>
<dbReference type="InterPro" id="IPR036219">
    <property type="entry name" value="eEF-1beta-like_sf"/>
</dbReference>
<dbReference type="InterPro" id="IPR018940">
    <property type="entry name" value="EF-1_beta_acid_region_euk"/>
</dbReference>
<dbReference type="InterPro" id="IPR049720">
    <property type="entry name" value="EF1B_bsu/dsu"/>
</dbReference>
<dbReference type="InterPro" id="IPR014038">
    <property type="entry name" value="EF1B_bsu/dsu_GNE"/>
</dbReference>
<dbReference type="InterPro" id="IPR014717">
    <property type="entry name" value="Transl_elong_EF1B/ribsomal_bS6"/>
</dbReference>
<dbReference type="InterPro" id="IPR001326">
    <property type="entry name" value="Transl_elong_EF1B_B/D_CS"/>
</dbReference>
<dbReference type="PANTHER" id="PTHR11595">
    <property type="entry name" value="EF-HAND AND COILED-COIL DOMAIN-CONTAINING FAMILY MEMBER"/>
    <property type="match status" value="1"/>
</dbReference>
<dbReference type="PANTHER" id="PTHR11595:SF26">
    <property type="entry name" value="ELONGATION FACTOR 1-DELTA"/>
    <property type="match status" value="1"/>
</dbReference>
<dbReference type="Pfam" id="PF10587">
    <property type="entry name" value="EF-1_beta_acid"/>
    <property type="match status" value="1"/>
</dbReference>
<dbReference type="Pfam" id="PF00736">
    <property type="entry name" value="EF1_GNE"/>
    <property type="match status" value="1"/>
</dbReference>
<dbReference type="SMART" id="SM01182">
    <property type="entry name" value="EF-1_beta_acid"/>
    <property type="match status" value="1"/>
</dbReference>
<dbReference type="SMART" id="SM00888">
    <property type="entry name" value="EF1_GNE"/>
    <property type="match status" value="1"/>
</dbReference>
<dbReference type="SUPFAM" id="SSF54984">
    <property type="entry name" value="eEF-1beta-like"/>
    <property type="match status" value="1"/>
</dbReference>
<dbReference type="PROSITE" id="PS00824">
    <property type="entry name" value="EF1BD_1"/>
    <property type="match status" value="1"/>
</dbReference>
<dbReference type="PROSITE" id="PS00825">
    <property type="entry name" value="EF1BD_2"/>
    <property type="match status" value="1"/>
</dbReference>
<comment type="function">
    <molecule>Isoform 1</molecule>
    <text evidence="1">EF-1-beta and EF-1-delta stimulate the exchange of GDP bound to EF-1-alpha to GTP, regenerating EF-1-alpha for another round of transfer of aminoacyl-tRNAs to the ribosome.</text>
</comment>
<comment type="function">
    <molecule>Isoform 2</molecule>
    <text evidence="1">Regulates induction of heat-shock-responsive genes through association with heat shock transcription factors and direct DNA-binding at heat shock promoter elements (HSE).</text>
</comment>
<comment type="subunit">
    <text evidence="1">EF-1 is composed of 4 subunits: alpha, beta, delta isoform 1, and gamma. Isoform 2 interacts with HSF1 and NFE2L2 (By similarity).</text>
</comment>
<comment type="subcellular location">
    <molecule>Isoform 2</molecule>
    <subcellularLocation>
        <location evidence="1">Nucleus</location>
    </subcellularLocation>
</comment>
<comment type="alternative products">
    <event type="alternative splicing"/>
    <isoform>
        <id>Q4R3D4-1</id>
        <name>1</name>
        <sequence type="displayed"/>
    </isoform>
    <isoform>
        <id>Q4R3D4-2</id>
        <name>2</name>
        <name>eEF1BdeltaL</name>
        <sequence type="described" ref="VSP_037886"/>
    </isoform>
</comment>
<comment type="similarity">
    <text evidence="7">Belongs to the EF-1-beta/EF-1-delta family.</text>
</comment>